<comment type="function">
    <text evidence="2">The phosphoenolpyruvate-dependent sugar phosphotransferase system (sugar PTS), a major carbohydrate active transport system, catalyzes the phosphorylation of incoming sugar substrates concomitantly with their translocation across the cell membrane. The enzyme II CmtAB PTS system is involved in D-mannitol transport.</text>
</comment>
<comment type="catalytic activity">
    <reaction evidence="1 2">
        <text>D-mannitol(out) + N(pros)-phospho-L-histidyl-[protein] = D-mannitol 1-phosphate(in) + L-histidyl-[protein]</text>
        <dbReference type="Rhea" id="RHEA:33363"/>
        <dbReference type="Rhea" id="RHEA-COMP:9745"/>
        <dbReference type="Rhea" id="RHEA-COMP:9746"/>
        <dbReference type="ChEBI" id="CHEBI:16899"/>
        <dbReference type="ChEBI" id="CHEBI:29979"/>
        <dbReference type="ChEBI" id="CHEBI:61381"/>
        <dbReference type="ChEBI" id="CHEBI:64837"/>
        <dbReference type="EC" id="2.7.1.197"/>
    </reaction>
</comment>
<comment type="subunit">
    <text evidence="2">Homodimer.</text>
</comment>
<comment type="subcellular location">
    <subcellularLocation>
        <location evidence="4">Cell membrane</location>
        <topology evidence="4">Multi-pass membrane protein</topology>
    </subcellularLocation>
</comment>
<comment type="domain">
    <text evidence="4">The EIIC type-2 domain forms the PTS system translocation channel and contains the specific substrate-binding site.</text>
</comment>
<comment type="domain">
    <text evidence="3">The PTS EIIB type-2 domain is phosphorylated by phospho-EIIA on a cysteinyl residue. Then, it transfers the phosphoryl group to the sugar substrate concomitantly with the sugar uptake processed by the PTS EIIC type-2 domain.</text>
</comment>
<organism>
    <name type="scientific">Staphylococcus aureus (strain MSSA476)</name>
    <dbReference type="NCBI Taxonomy" id="282459"/>
    <lineage>
        <taxon>Bacteria</taxon>
        <taxon>Bacillati</taxon>
        <taxon>Bacillota</taxon>
        <taxon>Bacilli</taxon>
        <taxon>Bacillales</taxon>
        <taxon>Staphylococcaceae</taxon>
        <taxon>Staphylococcus</taxon>
    </lineage>
</organism>
<name>PTMCB_STAAS</name>
<evidence type="ECO:0000250" key="1">
    <source>
        <dbReference type="UniProtKB" id="P00550"/>
    </source>
</evidence>
<evidence type="ECO:0000250" key="2">
    <source>
        <dbReference type="UniProtKB" id="P28008"/>
    </source>
</evidence>
<evidence type="ECO:0000255" key="3">
    <source>
        <dbReference type="PROSITE-ProRule" id="PRU00422"/>
    </source>
</evidence>
<evidence type="ECO:0000255" key="4">
    <source>
        <dbReference type="PROSITE-ProRule" id="PRU00427"/>
    </source>
</evidence>
<evidence type="ECO:0000256" key="5">
    <source>
        <dbReference type="SAM" id="MobiDB-lite"/>
    </source>
</evidence>
<keyword id="KW-1003">Cell membrane</keyword>
<keyword id="KW-0418">Kinase</keyword>
<keyword id="KW-0472">Membrane</keyword>
<keyword id="KW-0597">Phosphoprotein</keyword>
<keyword id="KW-0598">Phosphotransferase system</keyword>
<keyword id="KW-0762">Sugar transport</keyword>
<keyword id="KW-0808">Transferase</keyword>
<keyword id="KW-0812">Transmembrane</keyword>
<keyword id="KW-1133">Transmembrane helix</keyword>
<keyword id="KW-0813">Transport</keyword>
<dbReference type="EC" id="2.7.1.197" evidence="1 2"/>
<dbReference type="EMBL" id="BX571857">
    <property type="protein sequence ID" value="CAG43866.1"/>
    <property type="molecule type" value="Genomic_DNA"/>
</dbReference>
<dbReference type="RefSeq" id="WP_000083807.1">
    <property type="nucleotide sequence ID" value="NC_002953.3"/>
</dbReference>
<dbReference type="SMR" id="Q6G7F6"/>
<dbReference type="KEGG" id="sas:SAS2057"/>
<dbReference type="HOGENOM" id="CLU_028721_2_1_9"/>
<dbReference type="GO" id="GO:0005886">
    <property type="term" value="C:plasma membrane"/>
    <property type="evidence" value="ECO:0007669"/>
    <property type="project" value="UniProtKB-SubCell"/>
</dbReference>
<dbReference type="GO" id="GO:0016301">
    <property type="term" value="F:kinase activity"/>
    <property type="evidence" value="ECO:0007669"/>
    <property type="project" value="UniProtKB-KW"/>
</dbReference>
<dbReference type="GO" id="GO:0022872">
    <property type="term" value="F:protein-N(PI)-phosphohistidine-mannitol phosphotransferase system transmembrane transporter activity"/>
    <property type="evidence" value="ECO:0007669"/>
    <property type="project" value="InterPro"/>
</dbReference>
<dbReference type="GO" id="GO:0090563">
    <property type="term" value="F:protein-phosphocysteine-sugar phosphotransferase activity"/>
    <property type="evidence" value="ECO:0007669"/>
    <property type="project" value="TreeGrafter"/>
</dbReference>
<dbReference type="GO" id="GO:0009401">
    <property type="term" value="P:phosphoenolpyruvate-dependent sugar phosphotransferase system"/>
    <property type="evidence" value="ECO:0007669"/>
    <property type="project" value="UniProtKB-KW"/>
</dbReference>
<dbReference type="CDD" id="cd05567">
    <property type="entry name" value="PTS_IIB_mannitol"/>
    <property type="match status" value="1"/>
</dbReference>
<dbReference type="FunFam" id="3.40.50.2300:FF:000047">
    <property type="entry name" value="PTS system mannitol-specific transporter subunit IICBA"/>
    <property type="match status" value="1"/>
</dbReference>
<dbReference type="Gene3D" id="3.40.50.2300">
    <property type="match status" value="1"/>
</dbReference>
<dbReference type="InterPro" id="IPR036095">
    <property type="entry name" value="PTS_EIIB-like_sf"/>
</dbReference>
<dbReference type="InterPro" id="IPR013011">
    <property type="entry name" value="PTS_EIIB_2"/>
</dbReference>
<dbReference type="InterPro" id="IPR003501">
    <property type="entry name" value="PTS_EIIB_2/3"/>
</dbReference>
<dbReference type="InterPro" id="IPR029503">
    <property type="entry name" value="PTS_EIIB_mannitol"/>
</dbReference>
<dbReference type="InterPro" id="IPR003352">
    <property type="entry name" value="PTS_EIIC"/>
</dbReference>
<dbReference type="InterPro" id="IPR013014">
    <property type="entry name" value="PTS_EIIC_2"/>
</dbReference>
<dbReference type="InterPro" id="IPR004718">
    <property type="entry name" value="PTS_IIC_mtl"/>
</dbReference>
<dbReference type="InterPro" id="IPR050893">
    <property type="entry name" value="Sugar_PTS"/>
</dbReference>
<dbReference type="NCBIfam" id="TIGR00851">
    <property type="entry name" value="mtlA"/>
    <property type="match status" value="1"/>
</dbReference>
<dbReference type="PANTHER" id="PTHR30181">
    <property type="entry name" value="MANNITOL PERMEASE IIC COMPONENT"/>
    <property type="match status" value="1"/>
</dbReference>
<dbReference type="PANTHER" id="PTHR30181:SF2">
    <property type="entry name" value="PTS SYSTEM MANNITOL-SPECIFIC EIICBA COMPONENT"/>
    <property type="match status" value="1"/>
</dbReference>
<dbReference type="Pfam" id="PF02378">
    <property type="entry name" value="PTS_EIIC"/>
    <property type="match status" value="1"/>
</dbReference>
<dbReference type="Pfam" id="PF02302">
    <property type="entry name" value="PTS_IIB"/>
    <property type="match status" value="1"/>
</dbReference>
<dbReference type="SUPFAM" id="SSF52794">
    <property type="entry name" value="PTS system IIB component-like"/>
    <property type="match status" value="1"/>
</dbReference>
<dbReference type="PROSITE" id="PS51099">
    <property type="entry name" value="PTS_EIIB_TYPE_2"/>
    <property type="match status" value="1"/>
</dbReference>
<dbReference type="PROSITE" id="PS51104">
    <property type="entry name" value="PTS_EIIC_TYPE_2"/>
    <property type="match status" value="1"/>
</dbReference>
<gene>
    <name type="primary">mtlA</name>
    <name type="ordered locus">SAS2057</name>
</gene>
<protein>
    <recommendedName>
        <fullName evidence="2">PTS system mannitol-specific EIICB component</fullName>
    </recommendedName>
    <alternativeName>
        <fullName evidence="2">EIICB-Mtl</fullName>
        <shortName evidence="2">EII-Mtl</shortName>
    </alternativeName>
    <domain>
        <recommendedName>
            <fullName evidence="2">Mannitol permease IIC component</fullName>
        </recommendedName>
        <alternativeName>
            <fullName evidence="2">PTS system mannitol-specific EIIC component</fullName>
        </alternativeName>
    </domain>
    <domain>
        <recommendedName>
            <fullName evidence="2">Mannitol-specific phosphotransferase enzyme IIB component</fullName>
            <ecNumber evidence="1 2">2.7.1.197</ecNumber>
        </recommendedName>
        <alternativeName>
            <fullName evidence="2">PTS system mannitol-specific EIIB component</fullName>
        </alternativeName>
    </domain>
</protein>
<feature type="chain" id="PRO_0000186624" description="PTS system mannitol-specific EIICB component">
    <location>
        <begin position="1"/>
        <end position="512"/>
    </location>
</feature>
<feature type="topological domain" description="Cytoplasmic" evidence="1">
    <location>
        <begin position="1"/>
        <end position="28"/>
    </location>
</feature>
<feature type="transmembrane region" description="Helical" evidence="1">
    <location>
        <begin position="29"/>
        <end position="50"/>
    </location>
</feature>
<feature type="topological domain" description="Extracellular" evidence="1">
    <location>
        <begin position="51"/>
        <end position="54"/>
    </location>
</feature>
<feature type="transmembrane region" description="Helical" evidence="1">
    <location>
        <begin position="55"/>
        <end position="75"/>
    </location>
</feature>
<feature type="topological domain" description="Cytoplasmic" evidence="1">
    <location>
        <begin position="76"/>
        <end position="139"/>
    </location>
</feature>
<feature type="transmembrane region" description="Helical" evidence="1">
    <location>
        <begin position="140"/>
        <end position="161"/>
    </location>
</feature>
<feature type="topological domain" description="Extracellular" evidence="1">
    <location>
        <begin position="162"/>
        <end position="170"/>
    </location>
</feature>
<feature type="transmembrane region" description="Helical" evidence="1">
    <location>
        <begin position="171"/>
        <end position="191"/>
    </location>
</feature>
<feature type="topological domain" description="Cytoplasmic" evidence="1">
    <location>
        <begin position="192"/>
        <end position="278"/>
    </location>
</feature>
<feature type="transmembrane region" description="Helical" evidence="1">
    <location>
        <begin position="279"/>
        <end position="298"/>
    </location>
</feature>
<feature type="topological domain" description="Extracellular" evidence="1">
    <location>
        <begin position="299"/>
        <end position="318"/>
    </location>
</feature>
<feature type="transmembrane region" description="Helical" evidence="1">
    <location>
        <begin position="319"/>
        <end position="340"/>
    </location>
</feature>
<feature type="topological domain" description="Cytoplasmic" evidence="1">
    <location>
        <begin position="341"/>
        <end position="512"/>
    </location>
</feature>
<feature type="domain" description="PTS EIIC type-2" evidence="4">
    <location>
        <begin position="17"/>
        <end position="349"/>
    </location>
</feature>
<feature type="domain" description="PTS EIIB type-2" evidence="3">
    <location>
        <begin position="419"/>
        <end position="512"/>
    </location>
</feature>
<feature type="region of interest" description="Disordered" evidence="5">
    <location>
        <begin position="355"/>
        <end position="402"/>
    </location>
</feature>
<feature type="compositionally biased region" description="Low complexity" evidence="5">
    <location>
        <begin position="365"/>
        <end position="376"/>
    </location>
</feature>
<feature type="compositionally biased region" description="Polar residues" evidence="5">
    <location>
        <begin position="380"/>
        <end position="392"/>
    </location>
</feature>
<feature type="active site" description="Phosphocysteine intermediate; for EIIB activity" evidence="1 2">
    <location>
        <position position="425"/>
    </location>
</feature>
<feature type="modified residue" description="Phosphocysteine; by EIIA" evidence="1 2 3">
    <location>
        <position position="425"/>
    </location>
</feature>
<sequence>MSQTEEKKGIGRRVQAFGSFLSSMIMPNIGAFIAWGFIAAIFIDNGWLPNKDLATLAGPMITYLIPLLIAFSGGRLIYDLRGGIIAATATMGVIVALPDTPMLLGAMIMGPLVGWLMKKTDQLIQPRTPQGFEMLFNNFSAGILGFIMTIAGFKILAPLMKFIMHILSVAVEALVHAHLLPLVSILVEPAKIVFLNNAINHGVFTPLGADQAAKAGQSILYTIESNPGPGLGILLAYMIFGKGTAKATSYGAGIIHFLGGIHEIYFPYVLMRPLLFIAVILGGMTGVATYQATGFGFKSPASPGSFIVYCLNAPRGEFLHMLLGVFLAALVSFVVAALIMKFTREPKQDLEAATAQMENTKGKKSSVASKLVSSDKNVNTEENASGNVSETSSSDDDPEALLDNYNTEDVDAHNYNNINHVIFACDAGMGSSAMGASMLRNKFKKAGINDITVTNTAINQLPKDAQLVITQKKLTDRAIKQTPNAIHISVDNFLNSPRYEELLNNLKKDDQA</sequence>
<accession>Q6G7F6</accession>
<reference key="1">
    <citation type="journal article" date="2004" name="Proc. Natl. Acad. Sci. U.S.A.">
        <title>Complete genomes of two clinical Staphylococcus aureus strains: evidence for the rapid evolution of virulence and drug resistance.</title>
        <authorList>
            <person name="Holden M.T.G."/>
            <person name="Feil E.J."/>
            <person name="Lindsay J.A."/>
            <person name="Peacock S.J."/>
            <person name="Day N.P.J."/>
            <person name="Enright M.C."/>
            <person name="Foster T.J."/>
            <person name="Moore C.E."/>
            <person name="Hurst L."/>
            <person name="Atkin R."/>
            <person name="Barron A."/>
            <person name="Bason N."/>
            <person name="Bentley S.D."/>
            <person name="Chillingworth C."/>
            <person name="Chillingworth T."/>
            <person name="Churcher C."/>
            <person name="Clark L."/>
            <person name="Corton C."/>
            <person name="Cronin A."/>
            <person name="Doggett J."/>
            <person name="Dowd L."/>
            <person name="Feltwell T."/>
            <person name="Hance Z."/>
            <person name="Harris B."/>
            <person name="Hauser H."/>
            <person name="Holroyd S."/>
            <person name="Jagels K."/>
            <person name="James K.D."/>
            <person name="Lennard N."/>
            <person name="Line A."/>
            <person name="Mayes R."/>
            <person name="Moule S."/>
            <person name="Mungall K."/>
            <person name="Ormond D."/>
            <person name="Quail M.A."/>
            <person name="Rabbinowitsch E."/>
            <person name="Rutherford K.M."/>
            <person name="Sanders M."/>
            <person name="Sharp S."/>
            <person name="Simmonds M."/>
            <person name="Stevens K."/>
            <person name="Whitehead S."/>
            <person name="Barrell B.G."/>
            <person name="Spratt B.G."/>
            <person name="Parkhill J."/>
        </authorList>
    </citation>
    <scope>NUCLEOTIDE SEQUENCE [LARGE SCALE GENOMIC DNA]</scope>
    <source>
        <strain>MSSA476</strain>
    </source>
</reference>
<proteinExistence type="inferred from homology"/>